<sequence>MKYDNLLDRFIKYVKVNTRSDPDSETTPSTESQEAFALTILKPEMEAIGLQDVHYNPVNGYLIGTLPANNPTLTRKIGFIAHMDTADFNAENVNPQIIDNYQGGDITLGSSNYKLDPKAFPNLNNYIGQTLITTDGTTLLGADDKSGIAEIMTAIEFLTSQPQIEHCDIKVAFGPDEEIGVGADKFEVADFEVDFAYTMDGGPLGELQYETFSAAALEVTFLGRNVHPGTAKDQMINALELAIDFHEKLPAKERPEYTDGYQGFYHLTGLTGTVEEARASYIIRDFEEASFEARKVKVENIAQSMNAHLGTKRVLVELNDQYYNMKKVIEKDMTAIELAKEVMEELAIKPVIEPIRGGTDGSKISFMGIPTPNIFAGGENMHGRFEFVSLQTMERAVDVIIGLVCKA</sequence>
<keyword id="KW-0031">Aminopeptidase</keyword>
<keyword id="KW-0963">Cytoplasm</keyword>
<keyword id="KW-0378">Hydrolase</keyword>
<keyword id="KW-0479">Metal-binding</keyword>
<keyword id="KW-0482">Metalloprotease</keyword>
<keyword id="KW-0645">Protease</keyword>
<keyword id="KW-0862">Zinc</keyword>
<name>PEPT_STRPB</name>
<reference key="1">
    <citation type="journal article" date="2006" name="Proc. Natl. Acad. Sci. U.S.A.">
        <title>Molecular genetic anatomy of inter- and intraserotype variation in the human bacterial pathogen group A Streptococcus.</title>
        <authorList>
            <person name="Beres S.B."/>
            <person name="Richter E.W."/>
            <person name="Nagiec M.J."/>
            <person name="Sumby P."/>
            <person name="Porcella S.F."/>
            <person name="DeLeo F.R."/>
            <person name="Musser J.M."/>
        </authorList>
    </citation>
    <scope>NUCLEOTIDE SEQUENCE [LARGE SCALE GENOMIC DNA]</scope>
    <source>
        <strain>MGAS2096</strain>
    </source>
</reference>
<gene>
    <name evidence="1" type="primary">pepT</name>
    <name type="ordered locus">MGAS2096_Spy0679</name>
</gene>
<accession>Q1JCH7</accession>
<protein>
    <recommendedName>
        <fullName evidence="1">Peptidase T</fullName>
        <ecNumber evidence="1">3.4.11.4</ecNumber>
    </recommendedName>
    <alternativeName>
        <fullName evidence="1">Aminotripeptidase</fullName>
        <shortName evidence="1">Tripeptidase</shortName>
    </alternativeName>
    <alternativeName>
        <fullName evidence="1">Tripeptide aminopeptidase</fullName>
    </alternativeName>
</protein>
<dbReference type="EC" id="3.4.11.4" evidence="1"/>
<dbReference type="EMBL" id="CP000261">
    <property type="protein sequence ID" value="ABF35731.1"/>
    <property type="status" value="ALT_INIT"/>
    <property type="molecule type" value="Genomic_DNA"/>
</dbReference>
<dbReference type="SMR" id="Q1JCH7"/>
<dbReference type="MEROPS" id="M20.003"/>
<dbReference type="KEGG" id="spj:MGAS2096_Spy0679"/>
<dbReference type="HOGENOM" id="CLU_053676_0_0_9"/>
<dbReference type="GO" id="GO:0005829">
    <property type="term" value="C:cytosol"/>
    <property type="evidence" value="ECO:0007669"/>
    <property type="project" value="TreeGrafter"/>
</dbReference>
<dbReference type="GO" id="GO:0008237">
    <property type="term" value="F:metallopeptidase activity"/>
    <property type="evidence" value="ECO:0007669"/>
    <property type="project" value="UniProtKB-KW"/>
</dbReference>
<dbReference type="GO" id="GO:0045148">
    <property type="term" value="F:tripeptide aminopeptidase activity"/>
    <property type="evidence" value="ECO:0007669"/>
    <property type="project" value="UniProtKB-UniRule"/>
</dbReference>
<dbReference type="GO" id="GO:0008270">
    <property type="term" value="F:zinc ion binding"/>
    <property type="evidence" value="ECO:0007669"/>
    <property type="project" value="UniProtKB-UniRule"/>
</dbReference>
<dbReference type="GO" id="GO:0043171">
    <property type="term" value="P:peptide catabolic process"/>
    <property type="evidence" value="ECO:0007669"/>
    <property type="project" value="UniProtKB-UniRule"/>
</dbReference>
<dbReference type="GO" id="GO:0006508">
    <property type="term" value="P:proteolysis"/>
    <property type="evidence" value="ECO:0007669"/>
    <property type="project" value="UniProtKB-UniRule"/>
</dbReference>
<dbReference type="CDD" id="cd03892">
    <property type="entry name" value="M20_peptT"/>
    <property type="match status" value="1"/>
</dbReference>
<dbReference type="FunFam" id="3.30.70.360:FF:000002">
    <property type="entry name" value="Peptidase T"/>
    <property type="match status" value="1"/>
</dbReference>
<dbReference type="Gene3D" id="3.30.70.360">
    <property type="match status" value="1"/>
</dbReference>
<dbReference type="Gene3D" id="3.40.630.10">
    <property type="entry name" value="Zn peptidases"/>
    <property type="match status" value="1"/>
</dbReference>
<dbReference type="HAMAP" id="MF_00550">
    <property type="entry name" value="Aminopeptidase_M20"/>
    <property type="match status" value="1"/>
</dbReference>
<dbReference type="InterPro" id="IPR001261">
    <property type="entry name" value="ArgE/DapE_CS"/>
</dbReference>
<dbReference type="InterPro" id="IPR036264">
    <property type="entry name" value="Bact_exopeptidase_dim_dom"/>
</dbReference>
<dbReference type="InterPro" id="IPR002933">
    <property type="entry name" value="Peptidase_M20"/>
</dbReference>
<dbReference type="InterPro" id="IPR011650">
    <property type="entry name" value="Peptidase_M20_dimer"/>
</dbReference>
<dbReference type="InterPro" id="IPR010161">
    <property type="entry name" value="Peptidase_M20B"/>
</dbReference>
<dbReference type="NCBIfam" id="TIGR01882">
    <property type="entry name" value="peptidase-T"/>
    <property type="match status" value="1"/>
</dbReference>
<dbReference type="NCBIfam" id="NF003976">
    <property type="entry name" value="PRK05469.1"/>
    <property type="match status" value="1"/>
</dbReference>
<dbReference type="NCBIfam" id="NF009920">
    <property type="entry name" value="PRK13381.1"/>
    <property type="match status" value="1"/>
</dbReference>
<dbReference type="PANTHER" id="PTHR42994">
    <property type="entry name" value="PEPTIDASE T"/>
    <property type="match status" value="1"/>
</dbReference>
<dbReference type="PANTHER" id="PTHR42994:SF1">
    <property type="entry name" value="PEPTIDASE T"/>
    <property type="match status" value="1"/>
</dbReference>
<dbReference type="Pfam" id="PF07687">
    <property type="entry name" value="M20_dimer"/>
    <property type="match status" value="1"/>
</dbReference>
<dbReference type="Pfam" id="PF01546">
    <property type="entry name" value="Peptidase_M20"/>
    <property type="match status" value="1"/>
</dbReference>
<dbReference type="PIRSF" id="PIRSF037215">
    <property type="entry name" value="Peptidase_M20B"/>
    <property type="match status" value="1"/>
</dbReference>
<dbReference type="SUPFAM" id="SSF55031">
    <property type="entry name" value="Bacterial exopeptidase dimerisation domain"/>
    <property type="match status" value="1"/>
</dbReference>
<dbReference type="SUPFAM" id="SSF53187">
    <property type="entry name" value="Zn-dependent exopeptidases"/>
    <property type="match status" value="1"/>
</dbReference>
<dbReference type="PROSITE" id="PS00758">
    <property type="entry name" value="ARGE_DAPE_CPG2_1"/>
    <property type="match status" value="1"/>
</dbReference>
<dbReference type="PROSITE" id="PS00759">
    <property type="entry name" value="ARGE_DAPE_CPG2_2"/>
    <property type="match status" value="1"/>
</dbReference>
<proteinExistence type="inferred from homology"/>
<feature type="chain" id="PRO_0000274024" description="Peptidase T">
    <location>
        <begin position="1"/>
        <end position="407"/>
    </location>
</feature>
<feature type="active site" evidence="1">
    <location>
        <position position="84"/>
    </location>
</feature>
<feature type="active site" description="Proton acceptor" evidence="1">
    <location>
        <position position="177"/>
    </location>
</feature>
<feature type="binding site" evidence="1">
    <location>
        <position position="82"/>
    </location>
    <ligand>
        <name>Zn(2+)</name>
        <dbReference type="ChEBI" id="CHEBI:29105"/>
        <label>1</label>
    </ligand>
</feature>
<feature type="binding site" evidence="1">
    <location>
        <position position="143"/>
    </location>
    <ligand>
        <name>Zn(2+)</name>
        <dbReference type="ChEBI" id="CHEBI:29105"/>
        <label>1</label>
    </ligand>
</feature>
<feature type="binding site" evidence="1">
    <location>
        <position position="143"/>
    </location>
    <ligand>
        <name>Zn(2+)</name>
        <dbReference type="ChEBI" id="CHEBI:29105"/>
        <label>2</label>
    </ligand>
</feature>
<feature type="binding site" evidence="1">
    <location>
        <position position="178"/>
    </location>
    <ligand>
        <name>Zn(2+)</name>
        <dbReference type="ChEBI" id="CHEBI:29105"/>
        <label>2</label>
    </ligand>
</feature>
<feature type="binding site" evidence="1">
    <location>
        <position position="200"/>
    </location>
    <ligand>
        <name>Zn(2+)</name>
        <dbReference type="ChEBI" id="CHEBI:29105"/>
        <label>1</label>
    </ligand>
</feature>
<feature type="binding site" evidence="1">
    <location>
        <position position="382"/>
    </location>
    <ligand>
        <name>Zn(2+)</name>
        <dbReference type="ChEBI" id="CHEBI:29105"/>
        <label>2</label>
    </ligand>
</feature>
<evidence type="ECO:0000255" key="1">
    <source>
        <dbReference type="HAMAP-Rule" id="MF_00550"/>
    </source>
</evidence>
<evidence type="ECO:0000305" key="2"/>
<comment type="function">
    <text evidence="1">Cleaves the N-terminal amino acid of tripeptides.</text>
</comment>
<comment type="catalytic activity">
    <reaction evidence="1">
        <text>Release of the N-terminal residue from a tripeptide.</text>
        <dbReference type="EC" id="3.4.11.4"/>
    </reaction>
</comment>
<comment type="cofactor">
    <cofactor evidence="1">
        <name>Zn(2+)</name>
        <dbReference type="ChEBI" id="CHEBI:29105"/>
    </cofactor>
    <text evidence="1">Binds 2 Zn(2+) ions per subunit.</text>
</comment>
<comment type="subcellular location">
    <subcellularLocation>
        <location evidence="1">Cytoplasm</location>
    </subcellularLocation>
</comment>
<comment type="similarity">
    <text evidence="1">Belongs to the peptidase M20B family.</text>
</comment>
<comment type="sequence caution" evidence="2">
    <conflict type="erroneous initiation">
        <sequence resource="EMBL-CDS" id="ABF35731"/>
    </conflict>
</comment>
<organism>
    <name type="scientific">Streptococcus pyogenes serotype M12 (strain MGAS2096)</name>
    <dbReference type="NCBI Taxonomy" id="370553"/>
    <lineage>
        <taxon>Bacteria</taxon>
        <taxon>Bacillati</taxon>
        <taxon>Bacillota</taxon>
        <taxon>Bacilli</taxon>
        <taxon>Lactobacillales</taxon>
        <taxon>Streptococcaceae</taxon>
        <taxon>Streptococcus</taxon>
    </lineage>
</organism>